<name>XYLC2_ACIGI</name>
<proteinExistence type="evidence at protein level"/>
<organism>
    <name type="scientific">Acinetobacter guillouiae</name>
    <name type="common">Acinetobacter genomosp. 11</name>
    <dbReference type="NCBI Taxonomy" id="106649"/>
    <lineage>
        <taxon>Bacteria</taxon>
        <taxon>Pseudomonadati</taxon>
        <taxon>Pseudomonadota</taxon>
        <taxon>Gammaproteobacteria</taxon>
        <taxon>Moraxellales</taxon>
        <taxon>Moraxellaceae</taxon>
        <taxon>Acinetobacter</taxon>
    </lineage>
</organism>
<reference key="1">
    <citation type="journal article" date="1991" name="Biochem. J.">
        <title>Comparison of benzyl alcohol dehydrogenases and benzaldehyde dehydrogenases from the benzyl alcohol and mandelate pathways in Acinetobacter calcoaceticus and from the TOL-plasmid-encoded toluene pathway in Pseudomonas putida. N-terminal amino acid sequences, amino acid compositions and immunological cross-reactions.</title>
        <authorList>
            <person name="Chalmers R.M."/>
            <person name="Keen J.N."/>
            <person name="Fewson C.A."/>
        </authorList>
    </citation>
    <scope>PROTEIN SEQUENCE</scope>
    <source>
        <strain>ATCC 11171 / DSM 590 / CCUG 2491 / LMG 988 / NCIMB 8250 / CIP 63.46 / B94</strain>
    </source>
</reference>
<comment type="catalytic activity">
    <reaction>
        <text>benzaldehyde + NAD(+) + H2O = benzoate + NADH + 2 H(+)</text>
        <dbReference type="Rhea" id="RHEA:11840"/>
        <dbReference type="ChEBI" id="CHEBI:15377"/>
        <dbReference type="ChEBI" id="CHEBI:15378"/>
        <dbReference type="ChEBI" id="CHEBI:16150"/>
        <dbReference type="ChEBI" id="CHEBI:17169"/>
        <dbReference type="ChEBI" id="CHEBI:57540"/>
        <dbReference type="ChEBI" id="CHEBI:57945"/>
        <dbReference type="EC" id="1.2.1.28"/>
    </reaction>
</comment>
<comment type="similarity">
    <text evidence="1">Belongs to the aldehyde dehydrogenase family.</text>
</comment>
<keyword id="KW-0058">Aromatic hydrocarbons catabolism</keyword>
<keyword id="KW-0903">Direct protein sequencing</keyword>
<keyword id="KW-0520">NAD</keyword>
<keyword id="KW-0560">Oxidoreductase</keyword>
<sequence>SIFTKELWDKKLFNGSWQSAQDTYSVIEVATGXVLGEIGYATAQ</sequence>
<evidence type="ECO:0000305" key="1"/>
<feature type="chain" id="PRO_0000056593" description="Benzaldehyde dehydrogenase [NAD(+)] II">
    <location>
        <begin position="1"/>
        <end position="44" status="greater than"/>
    </location>
</feature>
<feature type="non-terminal residue">
    <location>
        <position position="44"/>
    </location>
</feature>
<protein>
    <recommendedName>
        <fullName>Benzaldehyde dehydrogenase [NAD(+)] II</fullName>
        <ecNumber>1.2.1.28</ecNumber>
    </recommendedName>
</protein>
<accession>P46366</accession>
<dbReference type="EC" id="1.2.1.28"/>
<dbReference type="STRING" id="106649.GCA_000829655_00507"/>
<dbReference type="GO" id="GO:0018479">
    <property type="term" value="F:benzaldehyde dehydrogenase (NAD+) activity"/>
    <property type="evidence" value="ECO:0007669"/>
    <property type="project" value="UniProtKB-EC"/>
</dbReference>
<dbReference type="GO" id="GO:0009056">
    <property type="term" value="P:catabolic process"/>
    <property type="evidence" value="ECO:0007669"/>
    <property type="project" value="UniProtKB-KW"/>
</dbReference>